<dbReference type="EC" id="2.4.2.1" evidence="2"/>
<dbReference type="EMBL" id="CP000436">
    <property type="protein sequence ID" value="ABI24566.1"/>
    <property type="molecule type" value="Genomic_DNA"/>
</dbReference>
<dbReference type="SMR" id="Q0I1K5"/>
<dbReference type="KEGG" id="hso:HS_0288"/>
<dbReference type="eggNOG" id="COG0813">
    <property type="taxonomic scope" value="Bacteria"/>
</dbReference>
<dbReference type="HOGENOM" id="CLU_068457_2_0_6"/>
<dbReference type="GO" id="GO:0005829">
    <property type="term" value="C:cytosol"/>
    <property type="evidence" value="ECO:0007669"/>
    <property type="project" value="TreeGrafter"/>
</dbReference>
<dbReference type="GO" id="GO:0004731">
    <property type="term" value="F:purine-nucleoside phosphorylase activity"/>
    <property type="evidence" value="ECO:0007669"/>
    <property type="project" value="UniProtKB-UniRule"/>
</dbReference>
<dbReference type="GO" id="GO:0006152">
    <property type="term" value="P:purine nucleoside catabolic process"/>
    <property type="evidence" value="ECO:0007669"/>
    <property type="project" value="TreeGrafter"/>
</dbReference>
<dbReference type="CDD" id="cd09006">
    <property type="entry name" value="PNP_EcPNPI-like"/>
    <property type="match status" value="1"/>
</dbReference>
<dbReference type="FunFam" id="3.40.50.1580:FF:000002">
    <property type="entry name" value="Purine nucleoside phosphorylase DeoD-type"/>
    <property type="match status" value="1"/>
</dbReference>
<dbReference type="Gene3D" id="3.40.50.1580">
    <property type="entry name" value="Nucleoside phosphorylase domain"/>
    <property type="match status" value="1"/>
</dbReference>
<dbReference type="HAMAP" id="MF_01627">
    <property type="entry name" value="Pur_nucleosid_phosp"/>
    <property type="match status" value="1"/>
</dbReference>
<dbReference type="InterPro" id="IPR004402">
    <property type="entry name" value="DeoD-type"/>
</dbReference>
<dbReference type="InterPro" id="IPR018016">
    <property type="entry name" value="Nucleoside_phosphorylase_CS"/>
</dbReference>
<dbReference type="InterPro" id="IPR000845">
    <property type="entry name" value="Nucleoside_phosphorylase_d"/>
</dbReference>
<dbReference type="InterPro" id="IPR035994">
    <property type="entry name" value="Nucleoside_phosphorylase_sf"/>
</dbReference>
<dbReference type="NCBIfam" id="TIGR00107">
    <property type="entry name" value="deoD"/>
    <property type="match status" value="1"/>
</dbReference>
<dbReference type="NCBIfam" id="NF004489">
    <property type="entry name" value="PRK05819.1"/>
    <property type="match status" value="1"/>
</dbReference>
<dbReference type="NCBIfam" id="NF009914">
    <property type="entry name" value="PRK13374.1"/>
    <property type="match status" value="1"/>
</dbReference>
<dbReference type="PANTHER" id="PTHR43691:SF2">
    <property type="entry name" value="PURINE NUCLEOSIDE PHOSPHORYLASE DEOD-TYPE"/>
    <property type="match status" value="1"/>
</dbReference>
<dbReference type="PANTHER" id="PTHR43691">
    <property type="entry name" value="URIDINE PHOSPHORYLASE"/>
    <property type="match status" value="1"/>
</dbReference>
<dbReference type="Pfam" id="PF01048">
    <property type="entry name" value="PNP_UDP_1"/>
    <property type="match status" value="1"/>
</dbReference>
<dbReference type="SUPFAM" id="SSF53167">
    <property type="entry name" value="Purine and uridine phosphorylases"/>
    <property type="match status" value="1"/>
</dbReference>
<dbReference type="PROSITE" id="PS01232">
    <property type="entry name" value="PNP_UDP_1"/>
    <property type="match status" value="1"/>
</dbReference>
<accession>Q0I1K5</accession>
<sequence>MTPHINAPAGAFADVVLMPGDPLRAKYIAETFLENAQEVTNIRNMLGYTGTYKGRKISVMGHGMGIPSCSIYAKELITEYGVKKIIRVGSCGAVNMDVKIRDVIIGLGACTDSKVNRIRFKDNDFAAIADFGMAQAAVQAAKNKGIDVKVGNLFSADLFYTPDPEMFDVMEKYGILGVEMEAAGIYGVAAEFKAKALTICTVSDHIRTHEQTSAEERQLTFNEMIEIALESVLLGDSL</sequence>
<name>DEOD_HISS1</name>
<feature type="chain" id="PRO_1000069633" description="Purine nucleoside phosphorylase DeoD-type">
    <location>
        <begin position="1"/>
        <end position="238"/>
    </location>
</feature>
<feature type="active site" description="Proton donor" evidence="2">
    <location>
        <position position="204"/>
    </location>
</feature>
<feature type="binding site" evidence="1">
    <location>
        <position position="4"/>
    </location>
    <ligand>
        <name>a purine D-ribonucleoside</name>
        <dbReference type="ChEBI" id="CHEBI:142355"/>
        <note>ligand shared between dimeric partners</note>
    </ligand>
</feature>
<feature type="binding site" description="in other chain" evidence="1">
    <location>
        <position position="20"/>
    </location>
    <ligand>
        <name>phosphate</name>
        <dbReference type="ChEBI" id="CHEBI:43474"/>
        <note>ligand shared between dimeric partners</note>
    </ligand>
</feature>
<feature type="binding site" description="in other chain" evidence="1">
    <location>
        <position position="24"/>
    </location>
    <ligand>
        <name>phosphate</name>
        <dbReference type="ChEBI" id="CHEBI:43474"/>
        <note>ligand shared between dimeric partners</note>
    </ligand>
</feature>
<feature type="binding site" evidence="1">
    <location>
        <position position="43"/>
    </location>
    <ligand>
        <name>phosphate</name>
        <dbReference type="ChEBI" id="CHEBI:43474"/>
        <note>ligand shared between dimeric partners</note>
    </ligand>
</feature>
<feature type="binding site" description="in other chain" evidence="1">
    <location>
        <begin position="87"/>
        <end position="90"/>
    </location>
    <ligand>
        <name>phosphate</name>
        <dbReference type="ChEBI" id="CHEBI:43474"/>
        <note>ligand shared between dimeric partners</note>
    </ligand>
</feature>
<feature type="binding site" description="in other chain" evidence="1">
    <location>
        <begin position="179"/>
        <end position="181"/>
    </location>
    <ligand>
        <name>a purine D-ribonucleoside</name>
        <dbReference type="ChEBI" id="CHEBI:142355"/>
        <note>ligand shared between dimeric partners</note>
    </ligand>
</feature>
<feature type="binding site" description="in other chain" evidence="1">
    <location>
        <begin position="203"/>
        <end position="204"/>
    </location>
    <ligand>
        <name>a purine D-ribonucleoside</name>
        <dbReference type="ChEBI" id="CHEBI:142355"/>
        <note>ligand shared between dimeric partners</note>
    </ligand>
</feature>
<feature type="site" description="Important for catalytic activity" evidence="2">
    <location>
        <position position="217"/>
    </location>
</feature>
<protein>
    <recommendedName>
        <fullName evidence="2">Purine nucleoside phosphorylase DeoD-type</fullName>
        <shortName evidence="2">PNP</shortName>
        <ecNumber evidence="2">2.4.2.1</ecNumber>
    </recommendedName>
</protein>
<organism>
    <name type="scientific">Histophilus somni (strain 129Pt)</name>
    <name type="common">Haemophilus somnus</name>
    <dbReference type="NCBI Taxonomy" id="205914"/>
    <lineage>
        <taxon>Bacteria</taxon>
        <taxon>Pseudomonadati</taxon>
        <taxon>Pseudomonadota</taxon>
        <taxon>Gammaproteobacteria</taxon>
        <taxon>Pasteurellales</taxon>
        <taxon>Pasteurellaceae</taxon>
        <taxon>Histophilus</taxon>
    </lineage>
</organism>
<comment type="function">
    <text evidence="2">Catalyzes the reversible phosphorolytic breakdown of the N-glycosidic bond in the beta-(deoxy)ribonucleoside molecules, with the formation of the corresponding free purine bases and pentose-1-phosphate.</text>
</comment>
<comment type="catalytic activity">
    <reaction evidence="2">
        <text>a purine D-ribonucleoside + phosphate = a purine nucleobase + alpha-D-ribose 1-phosphate</text>
        <dbReference type="Rhea" id="RHEA:19805"/>
        <dbReference type="ChEBI" id="CHEBI:26386"/>
        <dbReference type="ChEBI" id="CHEBI:43474"/>
        <dbReference type="ChEBI" id="CHEBI:57720"/>
        <dbReference type="ChEBI" id="CHEBI:142355"/>
        <dbReference type="EC" id="2.4.2.1"/>
    </reaction>
</comment>
<comment type="catalytic activity">
    <reaction evidence="2">
        <text>a purine 2'-deoxy-D-ribonucleoside + phosphate = a purine nucleobase + 2-deoxy-alpha-D-ribose 1-phosphate</text>
        <dbReference type="Rhea" id="RHEA:36431"/>
        <dbReference type="ChEBI" id="CHEBI:26386"/>
        <dbReference type="ChEBI" id="CHEBI:43474"/>
        <dbReference type="ChEBI" id="CHEBI:57259"/>
        <dbReference type="ChEBI" id="CHEBI:142361"/>
        <dbReference type="EC" id="2.4.2.1"/>
    </reaction>
</comment>
<comment type="subunit">
    <text evidence="2">Homohexamer; trimer of homodimers.</text>
</comment>
<comment type="similarity">
    <text evidence="2">Belongs to the PNP/UDP phosphorylase family.</text>
</comment>
<evidence type="ECO:0000250" key="1">
    <source>
        <dbReference type="UniProtKB" id="P50389"/>
    </source>
</evidence>
<evidence type="ECO:0000255" key="2">
    <source>
        <dbReference type="HAMAP-Rule" id="MF_01627"/>
    </source>
</evidence>
<reference key="1">
    <citation type="journal article" date="2007" name="J. Bacteriol.">
        <title>Complete genome sequence of Haemophilus somnus (Histophilus somni) strain 129Pt and comparison to Haemophilus ducreyi 35000HP and Haemophilus influenzae Rd.</title>
        <authorList>
            <person name="Challacombe J.F."/>
            <person name="Duncan A.J."/>
            <person name="Brettin T.S."/>
            <person name="Bruce D."/>
            <person name="Chertkov O."/>
            <person name="Detter J.C."/>
            <person name="Han C.S."/>
            <person name="Misra M."/>
            <person name="Richardson P."/>
            <person name="Tapia R."/>
            <person name="Thayer N."/>
            <person name="Xie G."/>
            <person name="Inzana T.J."/>
        </authorList>
    </citation>
    <scope>NUCLEOTIDE SEQUENCE [LARGE SCALE GENOMIC DNA]</scope>
    <source>
        <strain>129Pt</strain>
    </source>
</reference>
<gene>
    <name evidence="2" type="primary">deoD</name>
    <name type="ordered locus">HS_0288</name>
</gene>
<proteinExistence type="inferred from homology"/>
<keyword id="KW-0328">Glycosyltransferase</keyword>
<keyword id="KW-0808">Transferase</keyword>